<dbReference type="EMBL" id="AB026639">
    <property type="protein sequence ID" value="BAA98185.1"/>
    <property type="molecule type" value="Genomic_DNA"/>
</dbReference>
<dbReference type="EMBL" id="CP002688">
    <property type="protein sequence ID" value="AED98083.1"/>
    <property type="molecule type" value="Genomic_DNA"/>
</dbReference>
<dbReference type="EMBL" id="BT006394">
    <property type="protein sequence ID" value="AAP21202.1"/>
    <property type="molecule type" value="mRNA"/>
</dbReference>
<dbReference type="EMBL" id="AY086493">
    <property type="protein sequence ID" value="AAM63494.1"/>
    <property type="molecule type" value="mRNA"/>
</dbReference>
<dbReference type="EMBL" id="AK227733">
    <property type="protein sequence ID" value="BAE99718.1"/>
    <property type="molecule type" value="mRNA"/>
</dbReference>
<dbReference type="RefSeq" id="NP_569016.1">
    <property type="nucleotide sequence ID" value="NM_125964.2"/>
</dbReference>
<dbReference type="BioGRID" id="21934">
    <property type="interactions" value="1"/>
</dbReference>
<dbReference type="FunCoup" id="Q9LSK9">
    <property type="interactions" value="294"/>
</dbReference>
<dbReference type="IntAct" id="Q9LSK9">
    <property type="interactions" value="1"/>
</dbReference>
<dbReference type="STRING" id="3702.Q9LSK9"/>
<dbReference type="iPTMnet" id="Q9LSK9"/>
<dbReference type="PaxDb" id="3702-AT5G65660.1"/>
<dbReference type="ProteomicsDB" id="243161"/>
<dbReference type="EnsemblPlants" id="AT5G65660.1">
    <property type="protein sequence ID" value="AT5G65660.1"/>
    <property type="gene ID" value="AT5G65660"/>
</dbReference>
<dbReference type="GeneID" id="836692"/>
<dbReference type="Gramene" id="AT5G65660.1">
    <property type="protein sequence ID" value="AT5G65660.1"/>
    <property type="gene ID" value="AT5G65660"/>
</dbReference>
<dbReference type="KEGG" id="ath:AT5G65660"/>
<dbReference type="Araport" id="AT5G65660"/>
<dbReference type="TAIR" id="AT5G65660"/>
<dbReference type="eggNOG" id="ENOG502RZJZ">
    <property type="taxonomic scope" value="Eukaryota"/>
</dbReference>
<dbReference type="HOGENOM" id="CLU_131795_0_0_1"/>
<dbReference type="InParanoid" id="Q9LSK9"/>
<dbReference type="OMA" id="AWPCEAT"/>
<dbReference type="OrthoDB" id="1936969at2759"/>
<dbReference type="PhylomeDB" id="Q9LSK9"/>
<dbReference type="PRO" id="PR:Q9LSK9"/>
<dbReference type="Proteomes" id="UP000006548">
    <property type="component" value="Chromosome 5"/>
</dbReference>
<dbReference type="ExpressionAtlas" id="Q9LSK9">
    <property type="expression patterns" value="baseline and differential"/>
</dbReference>
<dbReference type="GO" id="GO:0016020">
    <property type="term" value="C:membrane"/>
    <property type="evidence" value="ECO:0007669"/>
    <property type="project" value="UniProtKB-SubCell"/>
</dbReference>
<dbReference type="InterPro" id="IPR037699">
    <property type="entry name" value="At5g65660-like"/>
</dbReference>
<dbReference type="PANTHER" id="PTHR34291">
    <property type="entry name" value="HYDROXYPROLINE-RICH GLYCOPROTEIN FAMILY PROTEIN"/>
    <property type="match status" value="1"/>
</dbReference>
<dbReference type="PANTHER" id="PTHR34291:SF1">
    <property type="entry name" value="HYDROXYPROLINE-RICH GLYCOPROTEIN FAMILY PROTEIN"/>
    <property type="match status" value="1"/>
</dbReference>
<comment type="subcellular location">
    <subcellularLocation>
        <location evidence="3">Membrane</location>
        <topology evidence="3">Single-pass membrane protein</topology>
    </subcellularLocation>
</comment>
<accession>Q9LSK9</accession>
<proteinExistence type="evidence at transcript level"/>
<gene>
    <name type="ordered locus">At5g65660</name>
    <name type="ORF">K21L13.18</name>
</gene>
<keyword id="KW-0472">Membrane</keyword>
<keyword id="KW-1185">Reference proteome</keyword>
<keyword id="KW-0812">Transmembrane</keyword>
<keyword id="KW-1133">Transmembrane helix</keyword>
<organism>
    <name type="scientific">Arabidopsis thaliana</name>
    <name type="common">Mouse-ear cress</name>
    <dbReference type="NCBI Taxonomy" id="3702"/>
    <lineage>
        <taxon>Eukaryota</taxon>
        <taxon>Viridiplantae</taxon>
        <taxon>Streptophyta</taxon>
        <taxon>Embryophyta</taxon>
        <taxon>Tracheophyta</taxon>
        <taxon>Spermatophyta</taxon>
        <taxon>Magnoliopsida</taxon>
        <taxon>eudicotyledons</taxon>
        <taxon>Gunneridae</taxon>
        <taxon>Pentapetalae</taxon>
        <taxon>rosids</taxon>
        <taxon>malvids</taxon>
        <taxon>Brassicales</taxon>
        <taxon>Brassicaceae</taxon>
        <taxon>Camelineae</taxon>
        <taxon>Arabidopsis</taxon>
    </lineage>
</organism>
<sequence length="136" mass="15085">MENTQDFSPPHMDASRPSLGFPLGTALLLIIIFSLSGIFSCCYHWDKHRSLRRSLANGRPSADIESNPYKPKPPFPEMKKPQNLSVPVLMPGDNTPKFIALPCPCAPPRPEKLTVDVQTPPQSPPVKPARFPVPLY</sequence>
<protein>
    <recommendedName>
        <fullName>Uncharacterized protein At5g65660</fullName>
    </recommendedName>
</protein>
<evidence type="ECO:0000255" key="1"/>
<evidence type="ECO:0000256" key="2">
    <source>
        <dbReference type="SAM" id="MobiDB-lite"/>
    </source>
</evidence>
<evidence type="ECO:0000305" key="3"/>
<feature type="chain" id="PRO_0000315410" description="Uncharacterized protein At5g65660">
    <location>
        <begin position="1"/>
        <end position="136"/>
    </location>
</feature>
<feature type="transmembrane region" description="Helical" evidence="1">
    <location>
        <begin position="19"/>
        <end position="39"/>
    </location>
</feature>
<feature type="region of interest" description="Disordered" evidence="2">
    <location>
        <begin position="54"/>
        <end position="87"/>
    </location>
</feature>
<feature type="region of interest" description="Disordered" evidence="2">
    <location>
        <begin position="112"/>
        <end position="136"/>
    </location>
</feature>
<reference key="1">
    <citation type="submission" date="1999-04" db="EMBL/GenBank/DDBJ databases">
        <title>Structural analysis of Arabidopsis thaliana chromosome 5. XI.</title>
        <authorList>
            <person name="Kaneko T."/>
            <person name="Katoh T."/>
            <person name="Asamizu E."/>
            <person name="Sato S."/>
            <person name="Nakamura Y."/>
            <person name="Kotani H."/>
            <person name="Tabata S."/>
        </authorList>
    </citation>
    <scope>NUCLEOTIDE SEQUENCE [LARGE SCALE GENOMIC DNA]</scope>
    <source>
        <strain>cv. Columbia</strain>
    </source>
</reference>
<reference key="2">
    <citation type="journal article" date="2017" name="Plant J.">
        <title>Araport11: a complete reannotation of the Arabidopsis thaliana reference genome.</title>
        <authorList>
            <person name="Cheng C.Y."/>
            <person name="Krishnakumar V."/>
            <person name="Chan A.P."/>
            <person name="Thibaud-Nissen F."/>
            <person name="Schobel S."/>
            <person name="Town C.D."/>
        </authorList>
    </citation>
    <scope>GENOME REANNOTATION</scope>
    <source>
        <strain>cv. Columbia</strain>
    </source>
</reference>
<reference key="3">
    <citation type="journal article" date="2003" name="Science">
        <title>Empirical analysis of transcriptional activity in the Arabidopsis genome.</title>
        <authorList>
            <person name="Yamada K."/>
            <person name="Lim J."/>
            <person name="Dale J.M."/>
            <person name="Chen H."/>
            <person name="Shinn P."/>
            <person name="Palm C.J."/>
            <person name="Southwick A.M."/>
            <person name="Wu H.C."/>
            <person name="Kim C.J."/>
            <person name="Nguyen M."/>
            <person name="Pham P.K."/>
            <person name="Cheuk R.F."/>
            <person name="Karlin-Newmann G."/>
            <person name="Liu S.X."/>
            <person name="Lam B."/>
            <person name="Sakano H."/>
            <person name="Wu T."/>
            <person name="Yu G."/>
            <person name="Miranda M."/>
            <person name="Quach H.L."/>
            <person name="Tripp M."/>
            <person name="Chang C.H."/>
            <person name="Lee J.M."/>
            <person name="Toriumi M.J."/>
            <person name="Chan M.M."/>
            <person name="Tang C.C."/>
            <person name="Onodera C.S."/>
            <person name="Deng J.M."/>
            <person name="Akiyama K."/>
            <person name="Ansari Y."/>
            <person name="Arakawa T."/>
            <person name="Banh J."/>
            <person name="Banno F."/>
            <person name="Bowser L."/>
            <person name="Brooks S.Y."/>
            <person name="Carninci P."/>
            <person name="Chao Q."/>
            <person name="Choy N."/>
            <person name="Enju A."/>
            <person name="Goldsmith A.D."/>
            <person name="Gurjal M."/>
            <person name="Hansen N.F."/>
            <person name="Hayashizaki Y."/>
            <person name="Johnson-Hopson C."/>
            <person name="Hsuan V.W."/>
            <person name="Iida K."/>
            <person name="Karnes M."/>
            <person name="Khan S."/>
            <person name="Koesema E."/>
            <person name="Ishida J."/>
            <person name="Jiang P.X."/>
            <person name="Jones T."/>
            <person name="Kawai J."/>
            <person name="Kamiya A."/>
            <person name="Meyers C."/>
            <person name="Nakajima M."/>
            <person name="Narusaka M."/>
            <person name="Seki M."/>
            <person name="Sakurai T."/>
            <person name="Satou M."/>
            <person name="Tamse R."/>
            <person name="Vaysberg M."/>
            <person name="Wallender E.K."/>
            <person name="Wong C."/>
            <person name="Yamamura Y."/>
            <person name="Yuan S."/>
            <person name="Shinozaki K."/>
            <person name="Davis R.W."/>
            <person name="Theologis A."/>
            <person name="Ecker J.R."/>
        </authorList>
    </citation>
    <scope>NUCLEOTIDE SEQUENCE [LARGE SCALE MRNA]</scope>
    <source>
        <strain>cv. Columbia</strain>
    </source>
</reference>
<reference key="4">
    <citation type="submission" date="2002-03" db="EMBL/GenBank/DDBJ databases">
        <title>Full-length cDNA from Arabidopsis thaliana.</title>
        <authorList>
            <person name="Brover V.V."/>
            <person name="Troukhan M.E."/>
            <person name="Alexandrov N.A."/>
            <person name="Lu Y.-P."/>
            <person name="Flavell R.B."/>
            <person name="Feldmann K.A."/>
        </authorList>
    </citation>
    <scope>NUCLEOTIDE SEQUENCE [LARGE SCALE MRNA]</scope>
</reference>
<reference key="5">
    <citation type="submission" date="2006-07" db="EMBL/GenBank/DDBJ databases">
        <title>Large-scale analysis of RIKEN Arabidopsis full-length (RAFL) cDNAs.</title>
        <authorList>
            <person name="Totoki Y."/>
            <person name="Seki M."/>
            <person name="Ishida J."/>
            <person name="Nakajima M."/>
            <person name="Enju A."/>
            <person name="Kamiya A."/>
            <person name="Narusaka M."/>
            <person name="Shin-i T."/>
            <person name="Nakagawa M."/>
            <person name="Sakamoto N."/>
            <person name="Oishi K."/>
            <person name="Kohara Y."/>
            <person name="Kobayashi M."/>
            <person name="Toyoda A."/>
            <person name="Sakaki Y."/>
            <person name="Sakurai T."/>
            <person name="Iida K."/>
            <person name="Akiyama K."/>
            <person name="Satou M."/>
            <person name="Toyoda T."/>
            <person name="Konagaya A."/>
            <person name="Carninci P."/>
            <person name="Kawai J."/>
            <person name="Hayashizaki Y."/>
            <person name="Shinozaki K."/>
        </authorList>
    </citation>
    <scope>NUCLEOTIDE SEQUENCE [LARGE SCALE MRNA]</scope>
    <source>
        <strain>cv. Columbia</strain>
    </source>
</reference>
<name>Y5566_ARATH</name>